<comment type="function">
    <text evidence="4 5 8 9 12 13 16 17 20 21">RNA-binding protein involved in RNA processing and transcription regulation (PubMed:11779864, PubMed:11927564, PubMed:17630287, PubMed:17636033, PubMed:26119729, PubMed:26220998, PubMed:39461343). Acts as a regulator of mRNA stability: binds the poly(A) tail of mRNAs and pre-mRNAs, preventing their degradation by the exosome (PubMed:17636033, PubMed:26119729). Involved in the biogenesis of circular RNAs (circRNAs) which are produced by back-splicing circularization of pre-mRNAs (PubMed:39461343). Involved in mRNA poly(A) tail length control and nuclear export (PubMed:11779864, PubMed:11927564). Functions in surveillance and the packaging leading to generation of export-competent mRNPs (PubMed:19840948, PubMed:22560733). Controls both mRNP compaction that facilitates movement through nuclear pore complexes and the length of transcript poly(A) tails (PubMed:19840948, PubMed:22560733). Also acts as a regulator of transcription (PubMed:26220998, PubMed:8474438). Associates directly with nascent RNA polymerase II transcripts and remains associated during subsequent nuclear RNA processing reactions (PubMed:8474438). Required for RNA polymerase III (RNAPIII) transcription: required for the occupancy of RNAPIII and Transcription factor IIIB (TFIIIB) at target genes, possibly via direct association with nascent RNAPIII transcripts (PubMed:26220998).</text>
</comment>
<comment type="subunit">
    <text evidence="9 10 11">Interacts with MLP1 (PubMed:18190927, PubMed:18682389). Interacts with PUB1 (PubMed:17636033).</text>
</comment>
<comment type="interaction">
    <interactant intactId="EBI-11770">
        <id>P32505</id>
    </interactant>
    <interactant intactId="EBI-27549">
        <id>Q04839</id>
        <label>GFD1</label>
    </interactant>
    <organismsDiffer>false</organismsDiffer>
    <experiments>8</experiments>
</comment>
<comment type="interaction">
    <interactant intactId="EBI-11770">
        <id>P32505</id>
    </interactant>
    <interactant intactId="EBI-8394">
        <id>P38074</id>
        <label>HMT1</label>
    </interactant>
    <organismsDiffer>false</organismsDiffer>
    <experiments>2</experiments>
</comment>
<comment type="interaction">
    <interactant intactId="EBI-11770">
        <id>P32505</id>
    </interactant>
    <interactant intactId="EBI-9152">
        <id>P38217</id>
        <label>KAP104</label>
    </interactant>
    <organismsDiffer>false</organismsDiffer>
    <experiments>5</experiments>
</comment>
<comment type="interaction">
    <interactant intactId="EBI-11770">
        <id>P32505</id>
    </interactant>
    <interactant intactId="EBI-11009">
        <id>Q02455</id>
        <label>MLP1</label>
    </interactant>
    <organismsDiffer>false</organismsDiffer>
    <experiments>4</experiments>
</comment>
<comment type="subcellular location">
    <subcellularLocation>
        <location evidence="4 14 21">Nucleus</location>
    </subcellularLocation>
    <subcellularLocation>
        <location evidence="4">Cytoplasm</location>
    </subcellularLocation>
    <text evidence="4">Localizes to the nucleus at steady-state, it shuttles between nucleus and cytoplasm.</text>
</comment>
<comment type="domain">
    <text evidence="6">The N-terminal domain is required for nuclear export of both poly(A) RNA and NAB2.</text>
</comment>
<comment type="domain">
    <text evidence="6">The RGG domain is important for NAB2 import.</text>
</comment>
<comment type="domain">
    <text evidence="6 13 18">Contains seven CCCH Zn fingers that bind to A-rich RNAs and fingers 5 to 7 are critical for these function (PubMed:12496292, PubMed:22560733, PubMed:28180315). Binding A(11)G RNA induces dimerization of Zn fingers 5-7 mediated by the spatial arrangement of the fingers promoting each RNA chain binding two protein chains (PubMed:28180315).</text>
</comment>
<comment type="PTM">
    <text evidence="4">Methylated by HMT1.</text>
</comment>
<comment type="miscellaneous">
    <text evidence="7">Present with 9670 molecules/cell in log phase SD medium.</text>
</comment>
<comment type="similarity">
    <text evidence="23">Belongs to the ZC3H14 family.</text>
</comment>
<dbReference type="EMBL" id="L10288">
    <property type="protein sequence ID" value="AAA34819.1"/>
    <property type="molecule type" value="Genomic_DNA"/>
</dbReference>
<dbReference type="EMBL" id="L08079">
    <property type="protein sequence ID" value="AAA34820.1"/>
    <property type="molecule type" value="Genomic_DNA"/>
</dbReference>
<dbReference type="EMBL" id="Z72644">
    <property type="protein sequence ID" value="CAA96830.1"/>
    <property type="molecule type" value="Genomic_DNA"/>
</dbReference>
<dbReference type="EMBL" id="AY723810">
    <property type="protein sequence ID" value="AAU09727.1"/>
    <property type="molecule type" value="Genomic_DNA"/>
</dbReference>
<dbReference type="EMBL" id="BK006941">
    <property type="protein sequence ID" value="DAA07987.1"/>
    <property type="molecule type" value="Genomic_DNA"/>
</dbReference>
<dbReference type="PIR" id="B48058">
    <property type="entry name" value="B48058"/>
</dbReference>
<dbReference type="RefSeq" id="NP_011393.3">
    <property type="nucleotide sequence ID" value="NM_001180987.3"/>
</dbReference>
<dbReference type="PDB" id="2JPS">
    <property type="method" value="NMR"/>
    <property type="chains" value="A=1-105"/>
</dbReference>
<dbReference type="PDB" id="2LHN">
    <property type="method" value="NMR"/>
    <property type="chains" value="A=409-483"/>
</dbReference>
<dbReference type="PDB" id="2V75">
    <property type="method" value="X-ray"/>
    <property type="resolution" value="1.80 A"/>
    <property type="chains" value="A=1-104"/>
</dbReference>
<dbReference type="PDB" id="3LCN">
    <property type="method" value="X-ray"/>
    <property type="resolution" value="2.00 A"/>
    <property type="chains" value="A/B=1-105"/>
</dbReference>
<dbReference type="PDB" id="3ZJ1">
    <property type="method" value="NMR"/>
    <property type="chains" value="A=253-333"/>
</dbReference>
<dbReference type="PDB" id="3ZJ2">
    <property type="method" value="NMR"/>
    <property type="chains" value="A=333-401"/>
</dbReference>
<dbReference type="PDB" id="4JLQ">
    <property type="method" value="X-ray"/>
    <property type="resolution" value="3.04 A"/>
    <property type="chains" value="B=205-242"/>
</dbReference>
<dbReference type="PDB" id="5L2L">
    <property type="method" value="X-ray"/>
    <property type="resolution" value="1.55 A"/>
    <property type="chains" value="A/B/E/F=409-483"/>
</dbReference>
<dbReference type="PDBsum" id="2JPS"/>
<dbReference type="PDBsum" id="2LHN"/>
<dbReference type="PDBsum" id="2V75"/>
<dbReference type="PDBsum" id="3LCN"/>
<dbReference type="PDBsum" id="3ZJ1"/>
<dbReference type="PDBsum" id="3ZJ2"/>
<dbReference type="PDBsum" id="4JLQ"/>
<dbReference type="PDBsum" id="5L2L"/>
<dbReference type="BMRB" id="P32505"/>
<dbReference type="SMR" id="P32505"/>
<dbReference type="BioGRID" id="33129">
    <property type="interactions" value="2775"/>
</dbReference>
<dbReference type="DIP" id="DIP-1331N"/>
<dbReference type="FunCoup" id="P32505">
    <property type="interactions" value="294"/>
</dbReference>
<dbReference type="IntAct" id="P32505">
    <property type="interactions" value="68"/>
</dbReference>
<dbReference type="MINT" id="P32505"/>
<dbReference type="STRING" id="4932.YGL122C"/>
<dbReference type="GlyGen" id="P32505">
    <property type="glycosylation" value="1 site"/>
</dbReference>
<dbReference type="iPTMnet" id="P32505"/>
<dbReference type="PaxDb" id="4932-YGL122C"/>
<dbReference type="PeptideAtlas" id="P32505"/>
<dbReference type="EnsemblFungi" id="YGL122C_mRNA">
    <property type="protein sequence ID" value="YGL122C"/>
    <property type="gene ID" value="YGL122C"/>
</dbReference>
<dbReference type="GeneID" id="852755"/>
<dbReference type="KEGG" id="sce:YGL122C"/>
<dbReference type="AGR" id="SGD:S000003090"/>
<dbReference type="SGD" id="S000003090">
    <property type="gene designation" value="NAB2"/>
</dbReference>
<dbReference type="VEuPathDB" id="FungiDB:YGL122C"/>
<dbReference type="eggNOG" id="KOG3702">
    <property type="taxonomic scope" value="Eukaryota"/>
</dbReference>
<dbReference type="GeneTree" id="ENSGT00440000038430"/>
<dbReference type="HOGENOM" id="CLU_037973_1_0_1"/>
<dbReference type="InParanoid" id="P32505"/>
<dbReference type="OMA" id="HAHPTKV"/>
<dbReference type="OrthoDB" id="438553at2759"/>
<dbReference type="BioCyc" id="YEAST:G3O-30619-MONOMER"/>
<dbReference type="BioGRID-ORCS" id="852755">
    <property type="hits" value="7 hits in 10 CRISPR screens"/>
</dbReference>
<dbReference type="EvolutionaryTrace" id="P32505"/>
<dbReference type="PRO" id="PR:P32505"/>
<dbReference type="Proteomes" id="UP000002311">
    <property type="component" value="Chromosome VII"/>
</dbReference>
<dbReference type="RNAct" id="P32505">
    <property type="molecule type" value="protein"/>
</dbReference>
<dbReference type="GO" id="GO:0005737">
    <property type="term" value="C:cytoplasm"/>
    <property type="evidence" value="ECO:0000314"/>
    <property type="project" value="SGD"/>
</dbReference>
<dbReference type="GO" id="GO:0005634">
    <property type="term" value="C:nucleus"/>
    <property type="evidence" value="ECO:0000314"/>
    <property type="project" value="SGD"/>
</dbReference>
<dbReference type="GO" id="GO:0008097">
    <property type="term" value="F:5S rRNA binding"/>
    <property type="evidence" value="ECO:0000314"/>
    <property type="project" value="SGD"/>
</dbReference>
<dbReference type="GO" id="GO:0008312">
    <property type="term" value="F:7S RNA binding"/>
    <property type="evidence" value="ECO:0000314"/>
    <property type="project" value="SGD"/>
</dbReference>
<dbReference type="GO" id="GO:0003729">
    <property type="term" value="F:mRNA binding"/>
    <property type="evidence" value="ECO:0007005"/>
    <property type="project" value="SGD"/>
</dbReference>
<dbReference type="GO" id="GO:0008143">
    <property type="term" value="F:poly(A) binding"/>
    <property type="evidence" value="ECO:0000314"/>
    <property type="project" value="SGD"/>
</dbReference>
<dbReference type="GO" id="GO:0033204">
    <property type="term" value="F:ribonuclease P RNA binding"/>
    <property type="evidence" value="ECO:0000314"/>
    <property type="project" value="SGD"/>
</dbReference>
<dbReference type="GO" id="GO:0000049">
    <property type="term" value="F:tRNA binding"/>
    <property type="evidence" value="ECO:0000314"/>
    <property type="project" value="SGD"/>
</dbReference>
<dbReference type="GO" id="GO:0008270">
    <property type="term" value="F:zinc ion binding"/>
    <property type="evidence" value="ECO:0007669"/>
    <property type="project" value="UniProtKB-KW"/>
</dbReference>
<dbReference type="GO" id="GO:1900152">
    <property type="term" value="P:negative regulation of nuclear-transcribed mRNA catabolic process, deadenylation-dependent decay"/>
    <property type="evidence" value="ECO:0000316"/>
    <property type="project" value="SGD"/>
</dbReference>
<dbReference type="GO" id="GO:0016973">
    <property type="term" value="P:poly(A)+ mRNA export from nucleus"/>
    <property type="evidence" value="ECO:0000315"/>
    <property type="project" value="SGD"/>
</dbReference>
<dbReference type="GO" id="GO:0045945">
    <property type="term" value="P:positive regulation of transcription by RNA polymerase III"/>
    <property type="evidence" value="ECO:0000314"/>
    <property type="project" value="SGD"/>
</dbReference>
<dbReference type="GO" id="GO:0043488">
    <property type="term" value="P:regulation of mRNA stability"/>
    <property type="evidence" value="ECO:0000315"/>
    <property type="project" value="SGD"/>
</dbReference>
<dbReference type="GO" id="GO:0160091">
    <property type="term" value="P:spliceosome-depend formation of circular RNA"/>
    <property type="evidence" value="ECO:0000314"/>
    <property type="project" value="UniProtKB"/>
</dbReference>
<dbReference type="FunFam" id="4.10.1000.40:FF:000003">
    <property type="entry name" value="Nuclear polyadenylated RNA-binding protein NAB2"/>
    <property type="match status" value="1"/>
</dbReference>
<dbReference type="FunFam" id="1.10.340.40:FF:000002">
    <property type="entry name" value="Polyadenylated RNA binding protein"/>
    <property type="match status" value="1"/>
</dbReference>
<dbReference type="FunFam" id="4.10.1000.40:FF:000005">
    <property type="entry name" value="Polyadenylated RNA binding protein"/>
    <property type="match status" value="1"/>
</dbReference>
<dbReference type="FunFam" id="4.10.1000.40:FF:000007">
    <property type="entry name" value="Polyadenylated RNA binding protein"/>
    <property type="match status" value="1"/>
</dbReference>
<dbReference type="Gene3D" id="4.10.1000.40">
    <property type="match status" value="3"/>
</dbReference>
<dbReference type="Gene3D" id="1.10.340.40">
    <property type="entry name" value="Nuclear abundant poly(A) RNA-bind protein 2, N-terminal domain"/>
    <property type="match status" value="1"/>
</dbReference>
<dbReference type="IDEAL" id="IID50171"/>
<dbReference type="InterPro" id="IPR040366">
    <property type="entry name" value="Nab2/ZC3H14"/>
</dbReference>
<dbReference type="InterPro" id="IPR043094">
    <property type="entry name" value="Nab2/ZC3H14_N_sf"/>
</dbReference>
<dbReference type="InterPro" id="IPR021083">
    <property type="entry name" value="Nab2_N"/>
</dbReference>
<dbReference type="InterPro" id="IPR049017">
    <property type="entry name" value="Nab2_Znf4"/>
</dbReference>
<dbReference type="InterPro" id="IPR041044">
    <property type="entry name" value="Nab2p_Zf1"/>
</dbReference>
<dbReference type="InterPro" id="IPR048410">
    <property type="entry name" value="Znf-CCCH_2-like_3"/>
</dbReference>
<dbReference type="PANTHER" id="PTHR14738">
    <property type="entry name" value="ZINC FINGER CCCH DOMAIN-CONTAINING PROTEIN 14"/>
    <property type="match status" value="1"/>
</dbReference>
<dbReference type="PANTHER" id="PTHR14738:SF29">
    <property type="entry name" value="ZINC FINGER CCCH DOMAIN-CONTAINING PROTEIN 14"/>
    <property type="match status" value="1"/>
</dbReference>
<dbReference type="Pfam" id="PF11517">
    <property type="entry name" value="Nab2"/>
    <property type="match status" value="1"/>
</dbReference>
<dbReference type="Pfam" id="PF21803">
    <property type="entry name" value="Nab2-zf4"/>
    <property type="match status" value="1"/>
</dbReference>
<dbReference type="Pfam" id="PF18260">
    <property type="entry name" value="Nab2p_Zf1"/>
    <property type="match status" value="1"/>
</dbReference>
<dbReference type="Pfam" id="PF14608">
    <property type="entry name" value="zf-CCCH_2"/>
    <property type="match status" value="4"/>
</dbReference>
<dbReference type="Pfam" id="PF21457">
    <property type="entry name" value="zf-CCCH_2-like_3"/>
    <property type="match status" value="1"/>
</dbReference>
<keyword id="KW-0002">3D-structure</keyword>
<keyword id="KW-0963">Cytoplasm</keyword>
<keyword id="KW-0479">Metal-binding</keyword>
<keyword id="KW-0488">Methylation</keyword>
<keyword id="KW-0539">Nucleus</keyword>
<keyword id="KW-0597">Phosphoprotein</keyword>
<keyword id="KW-1185">Reference proteome</keyword>
<keyword id="KW-0677">Repeat</keyword>
<keyword id="KW-0694">RNA-binding</keyword>
<keyword id="KW-0862">Zinc</keyword>
<keyword id="KW-0863">Zinc-finger</keyword>
<evidence type="ECO:0000250" key="1"/>
<evidence type="ECO:0000255" key="2"/>
<evidence type="ECO:0000256" key="3">
    <source>
        <dbReference type="SAM" id="MobiDB-lite"/>
    </source>
</evidence>
<evidence type="ECO:0000269" key="4">
    <source>
    </source>
</evidence>
<evidence type="ECO:0000269" key="5">
    <source>
    </source>
</evidence>
<evidence type="ECO:0000269" key="6">
    <source>
    </source>
</evidence>
<evidence type="ECO:0000269" key="7">
    <source>
    </source>
</evidence>
<evidence type="ECO:0000269" key="8">
    <source>
    </source>
</evidence>
<evidence type="ECO:0000269" key="9">
    <source>
    </source>
</evidence>
<evidence type="ECO:0000269" key="10">
    <source>
    </source>
</evidence>
<evidence type="ECO:0000269" key="11">
    <source>
    </source>
</evidence>
<evidence type="ECO:0000269" key="12">
    <source>
    </source>
</evidence>
<evidence type="ECO:0000269" key="13">
    <source>
    </source>
</evidence>
<evidence type="ECO:0000269" key="14">
    <source>
    </source>
</evidence>
<evidence type="ECO:0000269" key="15">
    <source>
    </source>
</evidence>
<evidence type="ECO:0000269" key="16">
    <source>
    </source>
</evidence>
<evidence type="ECO:0000269" key="17">
    <source>
    </source>
</evidence>
<evidence type="ECO:0000269" key="18">
    <source>
    </source>
</evidence>
<evidence type="ECO:0000269" key="19">
    <source>
    </source>
</evidence>
<evidence type="ECO:0000269" key="20">
    <source>
    </source>
</evidence>
<evidence type="ECO:0000269" key="21">
    <source>
    </source>
</evidence>
<evidence type="ECO:0000303" key="22">
    <source>
    </source>
</evidence>
<evidence type="ECO:0000305" key="23"/>
<evidence type="ECO:0000305" key="24">
    <source>
    </source>
</evidence>
<evidence type="ECO:0000305" key="25">
    <source>
    </source>
</evidence>
<evidence type="ECO:0000305" key="26">
    <source>
    </source>
</evidence>
<evidence type="ECO:0007744" key="27">
    <source>
        <dbReference type="PDB" id="2JPS"/>
    </source>
</evidence>
<evidence type="ECO:0007744" key="28">
    <source>
        <dbReference type="PDB" id="2LHN"/>
    </source>
</evidence>
<evidence type="ECO:0007744" key="29">
    <source>
        <dbReference type="PDB" id="2V75"/>
    </source>
</evidence>
<evidence type="ECO:0007744" key="30">
    <source>
        <dbReference type="PDB" id="3LCN"/>
    </source>
</evidence>
<evidence type="ECO:0007744" key="31">
    <source>
        <dbReference type="PDB" id="3ZJ1"/>
    </source>
</evidence>
<evidence type="ECO:0007744" key="32">
    <source>
        <dbReference type="PDB" id="3ZJ2"/>
    </source>
</evidence>
<evidence type="ECO:0007744" key="33">
    <source>
        <dbReference type="PDB" id="4JLQ"/>
    </source>
</evidence>
<evidence type="ECO:0007744" key="34">
    <source>
        <dbReference type="PDB" id="5L2L"/>
    </source>
</evidence>
<evidence type="ECO:0007829" key="35">
    <source>
        <dbReference type="PDB" id="2LHN"/>
    </source>
</evidence>
<evidence type="ECO:0007829" key="36">
    <source>
        <dbReference type="PDB" id="2V75"/>
    </source>
</evidence>
<evidence type="ECO:0007829" key="37">
    <source>
        <dbReference type="PDB" id="3ZJ1"/>
    </source>
</evidence>
<evidence type="ECO:0007829" key="38">
    <source>
        <dbReference type="PDB" id="3ZJ2"/>
    </source>
</evidence>
<evidence type="ECO:0007829" key="39">
    <source>
        <dbReference type="PDB" id="5L2L"/>
    </source>
</evidence>
<gene>
    <name evidence="22" type="primary">NAB2</name>
    <name type="ordered locus">YGL122C</name>
</gene>
<accession>P32505</accession>
<accession>D6VU26</accession>
<organism>
    <name type="scientific">Saccharomyces cerevisiae (strain ATCC 204508 / S288c)</name>
    <name type="common">Baker's yeast</name>
    <dbReference type="NCBI Taxonomy" id="559292"/>
    <lineage>
        <taxon>Eukaryota</taxon>
        <taxon>Fungi</taxon>
        <taxon>Dikarya</taxon>
        <taxon>Ascomycota</taxon>
        <taxon>Saccharomycotina</taxon>
        <taxon>Saccharomycetes</taxon>
        <taxon>Saccharomycetales</taxon>
        <taxon>Saccharomycetaceae</taxon>
        <taxon>Saccharomyces</taxon>
    </lineage>
</organism>
<name>NAB2_YEAST</name>
<feature type="chain" id="PRO_0000096687" description="Nuclear polyadenylated RNA-binding protein NAB2">
    <location>
        <begin position="1"/>
        <end position="525"/>
    </location>
</feature>
<feature type="repeat" description="1" evidence="23">
    <location>
        <begin position="121"/>
        <end position="124"/>
    </location>
</feature>
<feature type="repeat" description="2" evidence="23">
    <location>
        <begin position="125"/>
        <end position="128"/>
    </location>
</feature>
<feature type="repeat" description="3" evidence="23">
    <location>
        <begin position="129"/>
        <end position="132"/>
    </location>
</feature>
<feature type="repeat" description="4" evidence="23">
    <location>
        <begin position="133"/>
        <end position="136"/>
    </location>
</feature>
<feature type="repeat" description="5" evidence="23">
    <location>
        <begin position="137"/>
        <end position="140"/>
    </location>
</feature>
<feature type="repeat" description="6" evidence="23">
    <location>
        <begin position="141"/>
        <end position="144"/>
    </location>
</feature>
<feature type="repeat" description="7" evidence="23">
    <location>
        <begin position="145"/>
        <end position="148"/>
    </location>
</feature>
<feature type="repeat" description="8" evidence="23">
    <location>
        <begin position="149"/>
        <end position="152"/>
    </location>
</feature>
<feature type="repeat" description="9" evidence="23">
    <location>
        <begin position="153"/>
        <end position="156"/>
    </location>
</feature>
<feature type="repeat" description="10; approximate" evidence="23">
    <location>
        <begin position="157"/>
        <end position="160"/>
    </location>
</feature>
<feature type="zinc finger region" description="C3H1-type 1" evidence="2 26">
    <location>
        <begin position="262"/>
        <end position="278"/>
    </location>
</feature>
<feature type="zinc finger region" description="C3H1-type 2" evidence="2 26">
    <location>
        <begin position="283"/>
        <end position="300"/>
    </location>
</feature>
<feature type="zinc finger region" description="C3H1-type 3" evidence="2 26">
    <location>
        <begin position="340"/>
        <end position="355"/>
    </location>
</feature>
<feature type="zinc finger region" description="C3H1-type 4" evidence="2 26">
    <location>
        <begin position="371"/>
        <end position="386"/>
    </location>
</feature>
<feature type="zinc finger region" description="C3H1-type 5" evidence="2 24">
    <location>
        <begin position="415"/>
        <end position="430"/>
    </location>
</feature>
<feature type="zinc finger region" description="C3H1-type 6" evidence="2 24">
    <location>
        <begin position="437"/>
        <end position="452"/>
    </location>
</feature>
<feature type="zinc finger region" description="C3H1-type 7" evidence="2 24">
    <location>
        <begin position="458"/>
        <end position="473"/>
    </location>
</feature>
<feature type="region of interest" description="Disordered" evidence="3">
    <location>
        <begin position="102"/>
        <end position="160"/>
    </location>
</feature>
<feature type="region of interest" description="10 X 4 AA tandem repeats of Q-Q-Q-P" evidence="23">
    <location>
        <begin position="121"/>
        <end position="156"/>
    </location>
</feature>
<feature type="region of interest" description="Disordered" evidence="3">
    <location>
        <begin position="196"/>
        <end position="236"/>
    </location>
</feature>
<feature type="region of interest" description="PY-NLS nuclear localization signal" evidence="25">
    <location>
        <begin position="209"/>
        <end position="239"/>
    </location>
</feature>
<feature type="region of interest" description="RNA-binding RGG-box" evidence="1">
    <location>
        <begin position="209"/>
        <end position="228"/>
    </location>
</feature>
<feature type="region of interest" description="Disordered" evidence="3">
    <location>
        <begin position="503"/>
        <end position="525"/>
    </location>
</feature>
<feature type="compositionally biased region" description="Low complexity" evidence="3">
    <location>
        <begin position="103"/>
        <end position="160"/>
    </location>
</feature>
<feature type="compositionally biased region" description="Polar residues" evidence="3">
    <location>
        <begin position="510"/>
        <end position="525"/>
    </location>
</feature>
<feature type="modified residue" description="Omega-N-methylarginine" evidence="19">
    <location>
        <position position="209"/>
    </location>
</feature>
<feature type="modified residue" description="Omega-N-methylarginine" evidence="15">
    <location>
        <position position="222"/>
    </location>
</feature>
<feature type="modified residue" description="Phosphothreonine" evidence="19">
    <location>
        <position position="254"/>
    </location>
</feature>
<feature type="sequence variant" description="In YJA512.">
    <location>
        <begin position="130"/>
        <end position="157"/>
    </location>
</feature>
<feature type="helix" evidence="36">
    <location>
        <begin position="7"/>
        <end position="18"/>
    </location>
</feature>
<feature type="helix" evidence="36">
    <location>
        <begin position="28"/>
        <end position="40"/>
    </location>
</feature>
<feature type="helix" evidence="36">
    <location>
        <begin position="45"/>
        <end position="55"/>
    </location>
</feature>
<feature type="helix" evidence="36">
    <location>
        <begin position="61"/>
        <end position="79"/>
    </location>
</feature>
<feature type="helix" evidence="36">
    <location>
        <begin position="84"/>
        <end position="93"/>
    </location>
</feature>
<feature type="turn" evidence="37">
    <location>
        <begin position="269"/>
        <end position="273"/>
    </location>
</feature>
<feature type="turn" evidence="37">
    <location>
        <begin position="293"/>
        <end position="295"/>
    </location>
</feature>
<feature type="strand" evidence="37">
    <location>
        <begin position="297"/>
        <end position="299"/>
    </location>
</feature>
<feature type="strand" evidence="37">
    <location>
        <begin position="301"/>
        <end position="303"/>
    </location>
</feature>
<feature type="helix" evidence="37">
    <location>
        <begin position="305"/>
        <end position="326"/>
    </location>
</feature>
<feature type="strand" evidence="37">
    <location>
        <begin position="328"/>
        <end position="330"/>
    </location>
</feature>
<feature type="helix" evidence="38">
    <location>
        <begin position="343"/>
        <end position="345"/>
    </location>
</feature>
<feature type="strand" evidence="38">
    <location>
        <begin position="353"/>
        <end position="355"/>
    </location>
</feature>
<feature type="helix" evidence="38">
    <location>
        <begin position="374"/>
        <end position="376"/>
    </location>
</feature>
<feature type="strand" evidence="38">
    <location>
        <begin position="384"/>
        <end position="387"/>
    </location>
</feature>
<feature type="helix" evidence="38">
    <location>
        <begin position="390"/>
        <end position="393"/>
    </location>
</feature>
<feature type="strand" evidence="39">
    <location>
        <begin position="412"/>
        <end position="414"/>
    </location>
</feature>
<feature type="helix" evidence="39">
    <location>
        <begin position="418"/>
        <end position="420"/>
    </location>
</feature>
<feature type="strand" evidence="35">
    <location>
        <begin position="427"/>
        <end position="429"/>
    </location>
</feature>
<feature type="strand" evidence="39">
    <location>
        <begin position="433"/>
        <end position="436"/>
    </location>
</feature>
<feature type="helix" evidence="39">
    <location>
        <begin position="440"/>
        <end position="442"/>
    </location>
</feature>
<feature type="strand" evidence="39">
    <location>
        <begin position="455"/>
        <end position="457"/>
    </location>
</feature>
<feature type="helix" evidence="39">
    <location>
        <begin position="461"/>
        <end position="463"/>
    </location>
</feature>
<feature type="strand" evidence="35">
    <location>
        <begin position="470"/>
        <end position="472"/>
    </location>
</feature>
<sequence>MSQEQYTENLKVIVAEKLAGIPNFNEDIKYVAEYIVLLIVNGGTVESVVDELASLFDSVSRDTLANVVQTAFFALEALQQGESAENIVSKIRMMNAQSLGQSDIAQQQQQQQQQQQPDIAQQQPQQQPQQQPQQQPQQQPQQQPQQQPQQQPQQQPQLQPLQPQLGTQNAMQTDAPATPSPISAFSGVVNAAAPPQFAPVDNSQRFTQRGGGAVGKNRRGGRGGNRGGRNNNSTRFNPLAKALGMAGESNMNFTPTKKEGRCRLFPHCPLGRSCPHAHPTKVCNEYPNCPKPPGTCEFLHPNEDEELMKEMERTREEFQKRKADLLAAKRKPVQTGIVLCKFGALCSNPSCPFGHPTPANEDAKVIDLMWCDKNLTCDNPECRKAHSSLSKIKEVKPISQKKAAPPPVEKSLEQCKFGTHCTNKRCKYRHARSHIMCREGANCTRIDCLFGHPINEDCRFGVNCKNIYCLFRHPPGRVLPEKKGAAPNSNVPTNERPFALPENAIIENAPPQTSFTHQEQDTEMN</sequence>
<reference key="1">
    <citation type="journal article" date="1993" name="Mol. Cell. Biol.">
        <title>NAB2: a yeast nuclear polyadenylated RNA-binding protein essential for cell viability.</title>
        <authorList>
            <person name="Anderson J.T."/>
            <person name="Wilson S.M."/>
            <person name="Datar K.V."/>
            <person name="Swanson M.S."/>
        </authorList>
    </citation>
    <scope>NUCLEOTIDE SEQUENCE [GENOMIC DNA]</scope>
    <scope>FUNCTION</scope>
    <scope>SUBCELLULAR LOCATION</scope>
    <source>
        <strain>ATCC 208279 / BJ926</strain>
    </source>
</reference>
<reference key="2">
    <citation type="journal article" date="1997" name="Nature">
        <title>The nucleotide sequence of Saccharomyces cerevisiae chromosome VII.</title>
        <authorList>
            <person name="Tettelin H."/>
            <person name="Agostoni-Carbone M.L."/>
            <person name="Albermann K."/>
            <person name="Albers M."/>
            <person name="Arroyo J."/>
            <person name="Backes U."/>
            <person name="Barreiros T."/>
            <person name="Bertani I."/>
            <person name="Bjourson A.J."/>
            <person name="Brueckner M."/>
            <person name="Bruschi C.V."/>
            <person name="Carignani G."/>
            <person name="Castagnoli L."/>
            <person name="Cerdan E."/>
            <person name="Clemente M.L."/>
            <person name="Coblenz A."/>
            <person name="Coglievina M."/>
            <person name="Coissac E."/>
            <person name="Defoor E."/>
            <person name="Del Bino S."/>
            <person name="Delius H."/>
            <person name="Delneri D."/>
            <person name="de Wergifosse P."/>
            <person name="Dujon B."/>
            <person name="Durand P."/>
            <person name="Entian K.-D."/>
            <person name="Eraso P."/>
            <person name="Escribano V."/>
            <person name="Fabiani L."/>
            <person name="Fartmann B."/>
            <person name="Feroli F."/>
            <person name="Feuermann M."/>
            <person name="Frontali L."/>
            <person name="Garcia-Gonzalez M."/>
            <person name="Garcia-Saez M.I."/>
            <person name="Goffeau A."/>
            <person name="Guerreiro P."/>
            <person name="Hani J."/>
            <person name="Hansen M."/>
            <person name="Hebling U."/>
            <person name="Hernandez K."/>
            <person name="Heumann K."/>
            <person name="Hilger F."/>
            <person name="Hofmann B."/>
            <person name="Indge K.J."/>
            <person name="James C.M."/>
            <person name="Klima R."/>
            <person name="Koetter P."/>
            <person name="Kramer B."/>
            <person name="Kramer W."/>
            <person name="Lauquin G."/>
            <person name="Leuther H."/>
            <person name="Louis E.J."/>
            <person name="Maillier E."/>
            <person name="Marconi A."/>
            <person name="Martegani E."/>
            <person name="Mazon M.J."/>
            <person name="Mazzoni C."/>
            <person name="McReynolds A.D.K."/>
            <person name="Melchioretto P."/>
            <person name="Mewes H.-W."/>
            <person name="Minenkova O."/>
            <person name="Mueller-Auer S."/>
            <person name="Nawrocki A."/>
            <person name="Netter P."/>
            <person name="Neu R."/>
            <person name="Nombela C."/>
            <person name="Oliver S.G."/>
            <person name="Panzeri L."/>
            <person name="Paoluzi S."/>
            <person name="Plevani P."/>
            <person name="Portetelle D."/>
            <person name="Portillo F."/>
            <person name="Potier S."/>
            <person name="Purnelle B."/>
            <person name="Rieger M."/>
            <person name="Riles L."/>
            <person name="Rinaldi T."/>
            <person name="Robben J."/>
            <person name="Rodrigues-Pousada C."/>
            <person name="Rodriguez-Belmonte E."/>
            <person name="Rodriguez-Torres A.M."/>
            <person name="Rose M."/>
            <person name="Ruzzi M."/>
            <person name="Saliola M."/>
            <person name="Sanchez-Perez M."/>
            <person name="Schaefer B."/>
            <person name="Schaefer M."/>
            <person name="Scharfe M."/>
            <person name="Schmidheini T."/>
            <person name="Schreer A."/>
            <person name="Skala J."/>
            <person name="Souciet J.-L."/>
            <person name="Steensma H.Y."/>
            <person name="Talla E."/>
            <person name="Thierry A."/>
            <person name="Vandenbol M."/>
            <person name="van der Aart Q.J.M."/>
            <person name="Van Dyck L."/>
            <person name="Vanoni M."/>
            <person name="Verhasselt P."/>
            <person name="Voet M."/>
            <person name="Volckaert G."/>
            <person name="Wambutt R."/>
            <person name="Watson M.D."/>
            <person name="Weber N."/>
            <person name="Wedler E."/>
            <person name="Wedler H."/>
            <person name="Wipfli P."/>
            <person name="Wolf K."/>
            <person name="Wright L.F."/>
            <person name="Zaccaria P."/>
            <person name="Zimmermann M."/>
            <person name="Zollner A."/>
            <person name="Kleine K."/>
        </authorList>
    </citation>
    <scope>NUCLEOTIDE SEQUENCE [LARGE SCALE GENOMIC DNA]</scope>
    <source>
        <strain>ATCC 204508 / S288c</strain>
    </source>
</reference>
<reference key="3">
    <citation type="journal article" date="2014" name="G3 (Bethesda)">
        <title>The reference genome sequence of Saccharomyces cerevisiae: Then and now.</title>
        <authorList>
            <person name="Engel S.R."/>
            <person name="Dietrich F.S."/>
            <person name="Fisk D.G."/>
            <person name="Binkley G."/>
            <person name="Balakrishnan R."/>
            <person name="Costanzo M.C."/>
            <person name="Dwight S.S."/>
            <person name="Hitz B.C."/>
            <person name="Karra K."/>
            <person name="Nash R.S."/>
            <person name="Weng S."/>
            <person name="Wong E.D."/>
            <person name="Lloyd P."/>
            <person name="Skrzypek M.S."/>
            <person name="Miyasato S.R."/>
            <person name="Simison M."/>
            <person name="Cherry J.M."/>
        </authorList>
    </citation>
    <scope>GENOME REANNOTATION</scope>
    <source>
        <strain>ATCC 204508 / S288c</strain>
    </source>
</reference>
<reference key="4">
    <citation type="journal article" date="2007" name="Genome Res.">
        <title>Approaching a complete repository of sequence-verified protein-encoding clones for Saccharomyces cerevisiae.</title>
        <authorList>
            <person name="Hu Y."/>
            <person name="Rolfs A."/>
            <person name="Bhullar B."/>
            <person name="Murthy T.V.S."/>
            <person name="Zhu C."/>
            <person name="Berger M.F."/>
            <person name="Camargo A.A."/>
            <person name="Kelley F."/>
            <person name="McCarron S."/>
            <person name="Jepson D."/>
            <person name="Richardson A."/>
            <person name="Raphael J."/>
            <person name="Moreira D."/>
            <person name="Taycher E."/>
            <person name="Zuo D."/>
            <person name="Mohr S."/>
            <person name="Kane M.F."/>
            <person name="Williamson J."/>
            <person name="Simpson A.J.G."/>
            <person name="Bulyk M.L."/>
            <person name="Harlow E."/>
            <person name="Marsischky G."/>
            <person name="Kolodner R.D."/>
            <person name="LaBaer J."/>
        </authorList>
    </citation>
    <scope>NUCLEOTIDE SEQUENCE [GENOMIC DNA]</scope>
    <source>
        <strain>ATCC 204508 / S288c</strain>
    </source>
</reference>
<reference key="5">
    <citation type="journal article" date="2002" name="EMBO J.">
        <title>Dual requirement for yeast hnRNP Nab2p in mRNA poly(A) tail length control and nuclear export.</title>
        <authorList>
            <person name="Hector R.E."/>
            <person name="Nykamp K.R."/>
            <person name="Dheur S."/>
            <person name="Anderson J.T."/>
            <person name="Non P.J."/>
            <person name="Urbinati C.R."/>
            <person name="Wilson S.M."/>
            <person name="Minvielle-Sebastia L."/>
            <person name="Swanson M.S."/>
        </authorList>
    </citation>
    <scope>FUNCTION</scope>
</reference>
<reference key="6">
    <citation type="journal article" date="2002" name="J. Biol. Chem.">
        <title>Nab2p is required for poly(A) RNA export in Saccharomyces cerevisiae and is regulated by arginine methylation via Hmt1p.</title>
        <authorList>
            <person name="Green D.M."/>
            <person name="Marfatia K.A."/>
            <person name="Crafton E.B."/>
            <person name="Zhang X."/>
            <person name="Cheng X."/>
            <person name="Corbett A.H."/>
        </authorList>
    </citation>
    <scope>FUNCTION</scope>
    <scope>SUBCELLULAR LOCATION</scope>
    <scope>METHYLATION BY HMT1</scope>
</reference>
<reference key="7">
    <citation type="journal article" date="2003" name="J. Biol. Chem.">
        <title>Domain analysis of the Saccharomyces cerevisiae heterogeneous nuclear ribonucleoprotein, Nab2p. Dissecting the requirements for Nab2p-facilitated poly(A) RNA export.</title>
        <authorList>
            <person name="Marfatia K.A."/>
            <person name="Crafton E.B."/>
            <person name="Green D.M."/>
            <person name="Corbett A.H."/>
        </authorList>
    </citation>
    <scope>DOMAIN</scope>
</reference>
<reference key="8">
    <citation type="journal article" date="2003" name="Nature">
        <title>Global analysis of protein expression in yeast.</title>
        <authorList>
            <person name="Ghaemmaghami S."/>
            <person name="Huh W.-K."/>
            <person name="Bower K."/>
            <person name="Howson R.W."/>
            <person name="Belle A."/>
            <person name="Dephoure N."/>
            <person name="O'Shea E.K."/>
            <person name="Weissman J.S."/>
        </authorList>
    </citation>
    <scope>LEVEL OF PROTEIN EXPRESSION [LARGE SCALE ANALYSIS]</scope>
</reference>
<reference key="9">
    <citation type="journal article" date="2007" name="Mol. Cell. Biol.">
        <title>An interaction between two RNA binding proteins, Nab2 and Pub1, links mRNA processing/export and mRNA stability.</title>
        <authorList>
            <person name="Apponi L.H."/>
            <person name="Kelly S.M."/>
            <person name="Harreman M.T."/>
            <person name="Lehner A.N."/>
            <person name="Corbett A.H."/>
            <person name="Valentini S.R."/>
        </authorList>
    </citation>
    <scope>FUNCTION</scope>
    <scope>INTERACTION WITH PUB1</scope>
</reference>
<reference key="10">
    <citation type="journal article" date="2007" name="Proc. Natl. Acad. Sci. U.S.A.">
        <title>Recognition of polyadenosine RNA by zinc finger proteins.</title>
        <authorList>
            <person name="Kelly S.M."/>
            <person name="Pabit S.A."/>
            <person name="Kitchen C.M."/>
            <person name="Guo P."/>
            <person name="Marfatia K.A."/>
            <person name="Murphy T.J."/>
            <person name="Corbett A.H."/>
            <person name="Berland K.M."/>
        </authorList>
    </citation>
    <scope>FUNCTION</scope>
</reference>
<reference key="11">
    <citation type="journal article" date="2008" name="J. Biol. Chem.">
        <title>Functional significance of the interaction between the mRNA-binding protein, Nab2, and the nuclear pore-associated protein, Mlp1, in mRNA export.</title>
        <authorList>
            <person name="Fasken M.B."/>
            <person name="Stewart M."/>
            <person name="Corbett A.H."/>
        </authorList>
    </citation>
    <scope>INTERACTION WITH MLP1</scope>
</reference>
<reference key="12">
    <citation type="journal article" date="2009" name="J. Biol. Chem.">
        <title>Purification of nuclear poly(A)-binding protein Nab2 reveals association with the yeast transcriptome and a messenger ribonucleoprotein core structure.</title>
        <authorList>
            <person name="Batisse J."/>
            <person name="Batisse C."/>
            <person name="Budd A."/>
            <person name="Boettcher B."/>
            <person name="Hurt E."/>
        </authorList>
    </citation>
    <scope>FUNCTION</scope>
</reference>
<reference key="13">
    <citation type="journal article" date="2013" name="Nat. Struct. Mol. Biol.">
        <title>Global analysis of yeast mRNPs.</title>
        <authorList>
            <person name="Mitchell S.F."/>
            <person name="Jain S."/>
            <person name="She M."/>
            <person name="Parker R."/>
        </authorList>
    </citation>
    <scope>SUBCELLULAR LOCATION</scope>
</reference>
<reference key="14">
    <citation type="journal article" date="2015" name="Cell Rep.">
        <title>The nuclear polyA-binding protein Nab2p is essential for mRNA production.</title>
        <authorList>
            <person name="Schmid M."/>
            <person name="Olszewski P."/>
            <person name="Pelechano V."/>
            <person name="Gupta I."/>
            <person name="Steinmetz L.M."/>
            <person name="Jensen T.H."/>
        </authorList>
    </citation>
    <scope>FUNCTION</scope>
</reference>
<reference key="15">
    <citation type="journal article" date="2015" name="Genes Dev.">
        <title>The poly(A)-binding protein Nab2 functions in RNA polymerase III transcription.</title>
        <authorList>
            <person name="Reuter L.M."/>
            <person name="Meinel D.M."/>
            <person name="Straesser K."/>
        </authorList>
    </citation>
    <scope>FUNCTION</scope>
</reference>
<reference key="16">
    <citation type="journal article" date="2015" name="Proteomics">
        <title>Expanding the yeast protein arginine methylome.</title>
        <authorList>
            <person name="Plank M."/>
            <person name="Fischer R."/>
            <person name="Geoghegan V."/>
            <person name="Charles P.D."/>
            <person name="Konietzny R."/>
            <person name="Acuto O."/>
            <person name="Pears C."/>
            <person name="Schofield C.J."/>
            <person name="Kessler B.M."/>
        </authorList>
    </citation>
    <scope>METHYLATION AT ARG-222</scope>
</reference>
<reference key="17">
    <citation type="journal article" date="2021" name="J. Proteome Res.">
        <title>Discovery of arginine methylation, phosphorylation, and their co-occurrence in condensate-associated proteins in Saccharomyces cerevisiae.</title>
        <authorList>
            <person name="Hamey J.J."/>
            <person name="Nguyen A."/>
            <person name="Wilkins M.R."/>
        </authorList>
    </citation>
    <scope>METHYLATION AT ARG-209</scope>
    <scope>PHOSPHORYLATION AT THR-254</scope>
</reference>
<reference key="18">
    <citation type="journal article" date="2024" name="Mol. Cell">
        <title>ZC3H14 facilitates backsplicing by binding to exon-intron boundary and 3' UTR.</title>
        <authorList>
            <person name="Li Q."/>
            <person name="Yang G."/>
            <person name="Ren B."/>
            <person name="Liu X."/>
            <person name="Tang L.Q."/>
            <person name="Shi Q."/>
            <person name="Shan G."/>
            <person name="Wang X."/>
        </authorList>
    </citation>
    <scope>FUNCTION</scope>
</reference>
<reference evidence="27 29" key="19">
    <citation type="journal article" date="2008" name="J. Mol. Biol.">
        <title>Structure of the N-terminal Mlp1-binding domain of the Saccharomyces cerevisiae mRNA-binding protein, Nab2.</title>
        <authorList>
            <person name="Grant R.P."/>
            <person name="Marshall N.J."/>
            <person name="Yang J.C."/>
            <person name="Fasken M.B."/>
            <person name="Kelly S.M."/>
            <person name="Harreman M.T."/>
            <person name="Neuhaus D."/>
            <person name="Corbett A.H."/>
            <person name="Stewart M."/>
        </authorList>
    </citation>
    <scope>STRUCTURE BY NMR OF 1-105</scope>
    <scope>INTERACTION WITH MLP1</scope>
</reference>
<reference evidence="30" key="20">
    <citation type="journal article" date="2010" name="J. Biol. Chem.">
        <title>Structural basis for the function of the Saccharomyces cerevisiae Gfd1 protein in mRNA nuclear export.</title>
        <authorList>
            <person name="Zheng C."/>
            <person name="Fasken M.B."/>
            <person name="Marshall N.J."/>
            <person name="Brockmann C."/>
            <person name="Rubinson M.E."/>
            <person name="Wente S.R."/>
            <person name="Corbett A.H."/>
            <person name="Stewart M."/>
        </authorList>
    </citation>
    <scope>X-RAY CRYSTALLOGRAPHY (2.00 ANGSTROMS) OF 1-105 IN COMPLEX WITH ZINC</scope>
</reference>
<reference evidence="28" key="21">
    <citation type="journal article" date="2012" name="Structure">
        <title>Structural basis for polyadenosine-RNA binding by Nab2 Zn fingers and its function in mRNA nuclear export.</title>
        <authorList>
            <person name="Brockmann C."/>
            <person name="Soucek S."/>
            <person name="Kuhlmann S.I."/>
            <person name="Mills-Lujan K."/>
            <person name="Kelly S.M."/>
            <person name="Yang J.C."/>
            <person name="Iglesias N."/>
            <person name="Stutz F."/>
            <person name="Corbett A.H."/>
            <person name="Neuhaus D."/>
            <person name="Stewart M."/>
        </authorList>
    </citation>
    <scope>STRUCTURE BY NMR OF 409-483</scope>
    <scope>FUNCTION</scope>
</reference>
<reference evidence="33" key="22">
    <citation type="journal article" date="2013" name="J. Struct. Funct. Genomics">
        <title>Crystal structure of human Karyopherin beta2 bound to the PY-NLS of Saccharomyces cerevisiae Nab2.</title>
        <authorList>
            <person name="Soniat M."/>
            <person name="Sampathkumar P."/>
            <person name="Collett G."/>
            <person name="Gizzi A.S."/>
            <person name="Banu R.N."/>
            <person name="Bhosle R.C."/>
            <person name="Chamala S."/>
            <person name="Chowdhury S."/>
            <person name="Fiser A."/>
            <person name="Glenn A.S."/>
            <person name="Hammonds J."/>
            <person name="Hillerich B."/>
            <person name="Khafizov K."/>
            <person name="Love J.D."/>
            <person name="Matikainen B."/>
            <person name="Seidel R.D."/>
            <person name="Toro R."/>
            <person name="Rajesh Kumar P."/>
            <person name="Bonanno J.B."/>
            <person name="Chook Y.M."/>
            <person name="Almo S.C."/>
        </authorList>
    </citation>
    <scope>X-RAY CRYSTALLOGRAPHY (3.05 ANGSTROMS) OF 205-242</scope>
</reference>
<reference evidence="31 32" key="23">
    <citation type="journal article" date="2013" name="Structure">
        <title>Two singular types of CCCH tandem zinc finger in Nab2p contribute to polyadenosine RNA recognition.</title>
        <authorList>
            <person name="Martinez-Lumbreras S."/>
            <person name="Santiveri C.M."/>
            <person name="Mirassou Y."/>
            <person name="Zorrilla S."/>
            <person name="Perez-Canadillas J.M."/>
        </authorList>
    </citation>
    <scope>STRUCTURE BY NMR OF 253-333</scope>
</reference>
<reference evidence="34" key="24">
    <citation type="journal article" date="2017" name="Nucleic Acids Res.">
        <title>Structural basis for the dimerization of Nab2 generated by RNA binding provides insight into its contribution to both poly(A) tail length determination and transcript compaction in Saccharomyces cerevisiae.</title>
        <authorList>
            <person name="Aibara S."/>
            <person name="Gordon J.M."/>
            <person name="Riesterer A.S."/>
            <person name="McLaughlin S.H."/>
            <person name="Stewart M."/>
        </authorList>
    </citation>
    <scope>X-RAY CRYSTALLOGRAPHY (1.55 ANGSTROMS) OF 407-483 IN COMPLEX WITH ZINC</scope>
    <scope>DOMAIN</scope>
</reference>
<protein>
    <recommendedName>
        <fullName evidence="22">Nuclear polyadenylated RNA-binding protein NAB2</fullName>
    </recommendedName>
</protein>
<proteinExistence type="evidence at protein level"/>